<proteinExistence type="uncertain"/>
<protein>
    <recommendedName>
        <fullName>Putative gonadotropin-releasing hormone II receptor</fullName>
        <shortName>GnRH II receptor</shortName>
        <shortName>GnRH-II-R</shortName>
    </recommendedName>
    <alternativeName>
        <fullName>Type II GnRH receptor</fullName>
    </alternativeName>
</protein>
<gene>
    <name type="primary">GNRHR2</name>
</gene>
<name>GNRR2_HUMAN</name>
<accession>Q96P88</accession>
<accession>E7EN27</accession>
<accession>Q8TCX8</accession>
<reference key="1">
    <citation type="journal article" date="2001" name="Genomics">
        <title>The genes encoding the type II gonadotropin-releasing hormone receptor and the ribonucleoprotein RBM8A in humans overlap in two genomic loci.</title>
        <authorList>
            <person name="Faurholm B."/>
            <person name="Millar R.P."/>
            <person name="Katz A.A."/>
        </authorList>
    </citation>
    <scope>NUCLEOTIDE SEQUENCE [GENOMIC DNA]</scope>
</reference>
<reference key="2">
    <citation type="journal article" date="2002" name="Endocrinology">
        <title>Minireview: GnRH and GnRH receptor genes in the human genome.</title>
        <authorList>
            <person name="Neill J.D."/>
        </authorList>
    </citation>
    <scope>NUCLEOTIDE SEQUENCE [GENOMIC DNA]</scope>
    <scope>TISSUE SPECIFICITY</scope>
    <source>
        <tissue>Testis</tissue>
    </source>
</reference>
<reference key="3">
    <citation type="journal article" date="2006" name="Nature">
        <title>The DNA sequence and biological annotation of human chromosome 1.</title>
        <authorList>
            <person name="Gregory S.G."/>
            <person name="Barlow K.F."/>
            <person name="McLay K.E."/>
            <person name="Kaul R."/>
            <person name="Swarbreck D."/>
            <person name="Dunham A."/>
            <person name="Scott C.E."/>
            <person name="Howe K.L."/>
            <person name="Woodfine K."/>
            <person name="Spencer C.C.A."/>
            <person name="Jones M.C."/>
            <person name="Gillson C."/>
            <person name="Searle S."/>
            <person name="Zhou Y."/>
            <person name="Kokocinski F."/>
            <person name="McDonald L."/>
            <person name="Evans R."/>
            <person name="Phillips K."/>
            <person name="Atkinson A."/>
            <person name="Cooper R."/>
            <person name="Jones C."/>
            <person name="Hall R.E."/>
            <person name="Andrews T.D."/>
            <person name="Lloyd C."/>
            <person name="Ainscough R."/>
            <person name="Almeida J.P."/>
            <person name="Ambrose K.D."/>
            <person name="Anderson F."/>
            <person name="Andrew R.W."/>
            <person name="Ashwell R.I.S."/>
            <person name="Aubin K."/>
            <person name="Babbage A.K."/>
            <person name="Bagguley C.L."/>
            <person name="Bailey J."/>
            <person name="Beasley H."/>
            <person name="Bethel G."/>
            <person name="Bird C.P."/>
            <person name="Bray-Allen S."/>
            <person name="Brown J.Y."/>
            <person name="Brown A.J."/>
            <person name="Buckley D."/>
            <person name="Burton J."/>
            <person name="Bye J."/>
            <person name="Carder C."/>
            <person name="Chapman J.C."/>
            <person name="Clark S.Y."/>
            <person name="Clarke G."/>
            <person name="Clee C."/>
            <person name="Cobley V."/>
            <person name="Collier R.E."/>
            <person name="Corby N."/>
            <person name="Coville G.J."/>
            <person name="Davies J."/>
            <person name="Deadman R."/>
            <person name="Dunn M."/>
            <person name="Earthrowl M."/>
            <person name="Ellington A.G."/>
            <person name="Errington H."/>
            <person name="Frankish A."/>
            <person name="Frankland J."/>
            <person name="French L."/>
            <person name="Garner P."/>
            <person name="Garnett J."/>
            <person name="Gay L."/>
            <person name="Ghori M.R.J."/>
            <person name="Gibson R."/>
            <person name="Gilby L.M."/>
            <person name="Gillett W."/>
            <person name="Glithero R.J."/>
            <person name="Grafham D.V."/>
            <person name="Griffiths C."/>
            <person name="Griffiths-Jones S."/>
            <person name="Grocock R."/>
            <person name="Hammond S."/>
            <person name="Harrison E.S.I."/>
            <person name="Hart E."/>
            <person name="Haugen E."/>
            <person name="Heath P.D."/>
            <person name="Holmes S."/>
            <person name="Holt K."/>
            <person name="Howden P.J."/>
            <person name="Hunt A.R."/>
            <person name="Hunt S.E."/>
            <person name="Hunter G."/>
            <person name="Isherwood J."/>
            <person name="James R."/>
            <person name="Johnson C."/>
            <person name="Johnson D."/>
            <person name="Joy A."/>
            <person name="Kay M."/>
            <person name="Kershaw J.K."/>
            <person name="Kibukawa M."/>
            <person name="Kimberley A.M."/>
            <person name="King A."/>
            <person name="Knights A.J."/>
            <person name="Lad H."/>
            <person name="Laird G."/>
            <person name="Lawlor S."/>
            <person name="Leongamornlert D.A."/>
            <person name="Lloyd D.M."/>
            <person name="Loveland J."/>
            <person name="Lovell J."/>
            <person name="Lush M.J."/>
            <person name="Lyne R."/>
            <person name="Martin S."/>
            <person name="Mashreghi-Mohammadi M."/>
            <person name="Matthews L."/>
            <person name="Matthews N.S.W."/>
            <person name="McLaren S."/>
            <person name="Milne S."/>
            <person name="Mistry S."/>
            <person name="Moore M.J.F."/>
            <person name="Nickerson T."/>
            <person name="O'Dell C.N."/>
            <person name="Oliver K."/>
            <person name="Palmeiri A."/>
            <person name="Palmer S.A."/>
            <person name="Parker A."/>
            <person name="Patel D."/>
            <person name="Pearce A.V."/>
            <person name="Peck A.I."/>
            <person name="Pelan S."/>
            <person name="Phelps K."/>
            <person name="Phillimore B.J."/>
            <person name="Plumb R."/>
            <person name="Rajan J."/>
            <person name="Raymond C."/>
            <person name="Rouse G."/>
            <person name="Saenphimmachak C."/>
            <person name="Sehra H.K."/>
            <person name="Sheridan E."/>
            <person name="Shownkeen R."/>
            <person name="Sims S."/>
            <person name="Skuce C.D."/>
            <person name="Smith M."/>
            <person name="Steward C."/>
            <person name="Subramanian S."/>
            <person name="Sycamore N."/>
            <person name="Tracey A."/>
            <person name="Tromans A."/>
            <person name="Van Helmond Z."/>
            <person name="Wall M."/>
            <person name="Wallis J.M."/>
            <person name="White S."/>
            <person name="Whitehead S.L."/>
            <person name="Wilkinson J.E."/>
            <person name="Willey D.L."/>
            <person name="Williams H."/>
            <person name="Wilming L."/>
            <person name="Wray P.W."/>
            <person name="Wu Z."/>
            <person name="Coulson A."/>
            <person name="Vaudin M."/>
            <person name="Sulston J.E."/>
            <person name="Durbin R.M."/>
            <person name="Hubbard T."/>
            <person name="Wooster R."/>
            <person name="Dunham I."/>
            <person name="Carter N.P."/>
            <person name="McVean G."/>
            <person name="Ross M.T."/>
            <person name="Harrow J."/>
            <person name="Olson M.V."/>
            <person name="Beck S."/>
            <person name="Rogers J."/>
            <person name="Bentley D.R."/>
        </authorList>
    </citation>
    <scope>NUCLEOTIDE SEQUENCE [LARGE SCALE GENOMIC DNA]</scope>
</reference>
<reference key="4">
    <citation type="journal article" date="2003" name="Endocrinology">
        <title>A transcriptionally active human type II gonadotropin-releasing hormone receptor gene homolog overlaps two genes in the antisense orientation on chromosome 1q.12.</title>
        <authorList>
            <person name="Morgan K."/>
            <person name="Conklin D."/>
            <person name="Pawson A.J."/>
            <person name="Sellar R."/>
            <person name="Ott T.R."/>
            <person name="Millar R.P."/>
        </authorList>
    </citation>
    <scope>FUNCTION</scope>
</reference>
<reference key="5">
    <citation type="journal article" date="2009" name="Neuroendocrinology">
        <title>Retention and silencing of prepro-GnRH-II and type II GnRH receptor genes in mammals.</title>
        <authorList>
            <person name="Stewart A.J."/>
            <person name="Katz A.A."/>
            <person name="Millar R.P."/>
            <person name="Morgan K."/>
        </authorList>
    </citation>
    <scope>FUNCTION</scope>
</reference>
<comment type="function">
    <text evidence="4 5">Putative receptor for gonadotropin releasing hormone II (GnRH II) which is most probably non-functional.</text>
</comment>
<comment type="subcellular location">
    <subcellularLocation>
        <location>Cell membrane</location>
        <topology>Multi-pass membrane protein</topology>
    </subcellularLocation>
</comment>
<comment type="tissue specificity">
    <text evidence="3">Expressed in many tissues.</text>
</comment>
<comment type="PTM">
    <text evidence="6">Phosphorylated on the C-terminal cytoplasmic tail.</text>
</comment>
<comment type="similarity">
    <text evidence="2">Belongs to the G-protein coupled receptor 1 family.</text>
</comment>
<comment type="caution">
    <text evidence="6">Could be the product of a pseudogene. A frameshift introducing a premature stop codon in exon 1 most probably results in the inactivation of that transcribed gene in human. However, alternative splicing may allow the production of a truncated but possibly functional protein containing 5 transmembrane domains which is shown here.</text>
</comment>
<comment type="sequence caution" evidence="6">
    <conflict type="erroneous gene model prediction">
        <sequence resource="EMBL-CDS" id="AAL27000"/>
    </conflict>
</comment>
<dbReference type="EMBL" id="AF403014">
    <property type="protein sequence ID" value="AAL27000.1"/>
    <property type="status" value="ALT_SEQ"/>
    <property type="molecule type" value="Genomic_DNA"/>
</dbReference>
<dbReference type="EMBL" id="AY081843">
    <property type="protein sequence ID" value="AAL89821.1"/>
    <property type="molecule type" value="mRNA"/>
</dbReference>
<dbReference type="EMBL" id="AL160282">
    <property type="status" value="NOT_ANNOTATED_CDS"/>
    <property type="molecule type" value="Genomic_DNA"/>
</dbReference>
<dbReference type="SMR" id="Q96P88"/>
<dbReference type="FunCoup" id="Q96P88">
    <property type="interactions" value="578"/>
</dbReference>
<dbReference type="DrugBank" id="DB01406">
    <property type="generic name" value="Danazol"/>
</dbReference>
<dbReference type="DrugBank" id="DB00644">
    <property type="generic name" value="Gonadorelin"/>
</dbReference>
<dbReference type="DrugBank" id="DB00666">
    <property type="generic name" value="Nafarelin"/>
</dbReference>
<dbReference type="PhosphoSitePlus" id="Q96P88"/>
<dbReference type="BioMuta" id="HGNC:16341"/>
<dbReference type="DMDM" id="408360337"/>
<dbReference type="AGR" id="HGNC:16341"/>
<dbReference type="GeneCards" id="GNRHR2"/>
<dbReference type="HGNC" id="HGNC:16341">
    <property type="gene designation" value="GNRHR2"/>
</dbReference>
<dbReference type="MIM" id="612875">
    <property type="type" value="gene"/>
</dbReference>
<dbReference type="neXtProt" id="NX_Q96P88"/>
<dbReference type="InParanoid" id="Q96P88"/>
<dbReference type="PAN-GO" id="Q96P88">
    <property type="GO annotations" value="4 GO annotations based on evolutionary models"/>
</dbReference>
<dbReference type="TreeFam" id="TF106499"/>
<dbReference type="PathwayCommons" id="Q96P88"/>
<dbReference type="Reactome" id="R-HSA-375281">
    <property type="pathway name" value="Hormone ligand-binding receptors"/>
</dbReference>
<dbReference type="Reactome" id="R-HSA-416476">
    <property type="pathway name" value="G alpha (q) signalling events"/>
</dbReference>
<dbReference type="ChiTaRS" id="GNRHR2">
    <property type="organism name" value="human"/>
</dbReference>
<dbReference type="Pharos" id="Q96P88">
    <property type="development level" value="Tdark"/>
</dbReference>
<dbReference type="PRO" id="PR:Q96P88"/>
<dbReference type="Proteomes" id="UP000005640">
    <property type="component" value="Unplaced"/>
</dbReference>
<dbReference type="RNAct" id="Q96P88">
    <property type="molecule type" value="protein"/>
</dbReference>
<dbReference type="GO" id="GO:0005886">
    <property type="term" value="C:plasma membrane"/>
    <property type="evidence" value="ECO:0000318"/>
    <property type="project" value="GO_Central"/>
</dbReference>
<dbReference type="GO" id="GO:0004968">
    <property type="term" value="F:gonadotropin-releasing hormone receptor activity"/>
    <property type="evidence" value="ECO:0000318"/>
    <property type="project" value="GO_Central"/>
</dbReference>
<dbReference type="GO" id="GO:0032870">
    <property type="term" value="P:cellular response to hormone stimulus"/>
    <property type="evidence" value="ECO:0000318"/>
    <property type="project" value="GO_Central"/>
</dbReference>
<dbReference type="GO" id="GO:0007186">
    <property type="term" value="P:G protein-coupled receptor signaling pathway"/>
    <property type="evidence" value="ECO:0000318"/>
    <property type="project" value="GO_Central"/>
</dbReference>
<dbReference type="FunFam" id="1.20.1070.10:FF:000199">
    <property type="entry name" value="Gonadotropin-releasing hormone II receptor"/>
    <property type="match status" value="1"/>
</dbReference>
<dbReference type="Gene3D" id="1.20.1070.10">
    <property type="entry name" value="Rhodopsin 7-helix transmembrane proteins"/>
    <property type="match status" value="1"/>
</dbReference>
<dbReference type="InterPro" id="IPR000276">
    <property type="entry name" value="GPCR_Rhodpsn"/>
</dbReference>
<dbReference type="InterPro" id="IPR017452">
    <property type="entry name" value="GPCR_Rhodpsn_7TM"/>
</dbReference>
<dbReference type="InterPro" id="IPR001658">
    <property type="entry name" value="GphnRH_fam_rcpt"/>
</dbReference>
<dbReference type="PANTHER" id="PTHR24241:SF69">
    <property type="entry name" value="GONADOTROPIN-RELEASING HORMONE II RECEPTOR-RELATED"/>
    <property type="match status" value="1"/>
</dbReference>
<dbReference type="PANTHER" id="PTHR24241">
    <property type="entry name" value="NEUROPEPTIDE RECEPTOR-RELATED G-PROTEIN COUPLED RECEPTOR"/>
    <property type="match status" value="1"/>
</dbReference>
<dbReference type="Pfam" id="PF00001">
    <property type="entry name" value="7tm_1"/>
    <property type="match status" value="1"/>
</dbReference>
<dbReference type="PRINTS" id="PR00529">
    <property type="entry name" value="GNADOTRPHINR"/>
</dbReference>
<dbReference type="PRINTS" id="PR00237">
    <property type="entry name" value="GPCRRHODOPSN"/>
</dbReference>
<dbReference type="SUPFAM" id="SSF81321">
    <property type="entry name" value="Family A G protein-coupled receptor-like"/>
    <property type="match status" value="1"/>
</dbReference>
<dbReference type="PROSITE" id="PS50262">
    <property type="entry name" value="G_PROTEIN_RECEP_F1_2"/>
    <property type="match status" value="1"/>
</dbReference>
<evidence type="ECO:0000255" key="1"/>
<evidence type="ECO:0000255" key="2">
    <source>
        <dbReference type="PROSITE-ProRule" id="PRU00521"/>
    </source>
</evidence>
<evidence type="ECO:0000269" key="3">
    <source>
    </source>
</evidence>
<evidence type="ECO:0000269" key="4">
    <source>
    </source>
</evidence>
<evidence type="ECO:0000269" key="5">
    <source>
    </source>
</evidence>
<evidence type="ECO:0000305" key="6"/>
<sequence>MSAGNGTPWDATWNITVQWLAVDIACRTLMFLKLMATYSAAFLPVVIGLDRQAAVLNPLGSRSGVRKLLGAAWGLSFLLAFPQLFLFHTVHCAGPVPFTQCVTKGSFKAQWQETTYNLFTFCCLFLLPLTAMAICYSRIVLSVSRPQTRKGSHAPAGEFALPRSFDNCPRVRLRALRLALLILLTFILCWTPYYLLGMWYWFSPTMLTEVPPSLSHILFLLGLLNAPLDPLLYGAFTLGCRRGHQELSIDSSKEGSGRMLQEEIHAFRQLEVQKTVTSRRAGETKGISITSI</sequence>
<feature type="chain" id="PRO_0000069497" description="Putative gonadotropin-releasing hormone II receptor">
    <location>
        <begin position="1"/>
        <end position="292"/>
    </location>
</feature>
<feature type="topological domain" description="Extracellular" evidence="1">
    <location>
        <begin position="1"/>
        <end position="28"/>
    </location>
</feature>
<feature type="transmembrane region" description="Helical; Name=1" evidence="1">
    <location>
        <begin position="29"/>
        <end position="49"/>
    </location>
</feature>
<feature type="topological domain" description="Cytoplasmic" evidence="1">
    <location>
        <begin position="50"/>
        <end position="67"/>
    </location>
</feature>
<feature type="transmembrane region" description="Helical; Name=2" evidence="1">
    <location>
        <begin position="68"/>
        <end position="88"/>
    </location>
</feature>
<feature type="topological domain" description="Extracellular" evidence="1">
    <location>
        <begin position="89"/>
        <end position="115"/>
    </location>
</feature>
<feature type="transmembrane region" description="Helical; Name=3" evidence="1">
    <location>
        <begin position="116"/>
        <end position="136"/>
    </location>
</feature>
<feature type="topological domain" description="Cytoplasmic" evidence="1">
    <location>
        <begin position="137"/>
        <end position="177"/>
    </location>
</feature>
<feature type="transmembrane region" description="Helical; Name=4" evidence="1">
    <location>
        <begin position="178"/>
        <end position="198"/>
    </location>
</feature>
<feature type="topological domain" description="Extracellular" evidence="1">
    <location>
        <begin position="199"/>
        <end position="216"/>
    </location>
</feature>
<feature type="transmembrane region" description="Helical; Name=5" evidence="1">
    <location>
        <begin position="217"/>
        <end position="237"/>
    </location>
</feature>
<feature type="topological domain" description="Cytoplasmic" evidence="1">
    <location>
        <begin position="238"/>
        <end position="292"/>
    </location>
</feature>
<feature type="disulfide bond" evidence="2">
    <location>
        <begin position="26"/>
        <end position="101"/>
    </location>
</feature>
<feature type="sequence conflict" description="In Ref. 2; AAL89821." evidence="6" ref="2">
    <original>V</original>
    <variation>D</variation>
    <location>
        <position position="96"/>
    </location>
</feature>
<organism>
    <name type="scientific">Homo sapiens</name>
    <name type="common">Human</name>
    <dbReference type="NCBI Taxonomy" id="9606"/>
    <lineage>
        <taxon>Eukaryota</taxon>
        <taxon>Metazoa</taxon>
        <taxon>Chordata</taxon>
        <taxon>Craniata</taxon>
        <taxon>Vertebrata</taxon>
        <taxon>Euteleostomi</taxon>
        <taxon>Mammalia</taxon>
        <taxon>Eutheria</taxon>
        <taxon>Euarchontoglires</taxon>
        <taxon>Primates</taxon>
        <taxon>Haplorrhini</taxon>
        <taxon>Catarrhini</taxon>
        <taxon>Hominidae</taxon>
        <taxon>Homo</taxon>
    </lineage>
</organism>
<keyword id="KW-1003">Cell membrane</keyword>
<keyword id="KW-1015">Disulfide bond</keyword>
<keyword id="KW-0297">G-protein coupled receptor</keyword>
<keyword id="KW-0472">Membrane</keyword>
<keyword id="KW-0597">Phosphoprotein</keyword>
<keyword id="KW-0675">Receptor</keyword>
<keyword id="KW-1185">Reference proteome</keyword>
<keyword id="KW-0807">Transducer</keyword>
<keyword id="KW-0812">Transmembrane</keyword>
<keyword id="KW-1133">Transmembrane helix</keyword>